<organism>
    <name type="scientific">Bacillus subtilis (strain 168)</name>
    <dbReference type="NCBI Taxonomy" id="224308"/>
    <lineage>
        <taxon>Bacteria</taxon>
        <taxon>Bacillati</taxon>
        <taxon>Bacillota</taxon>
        <taxon>Bacilli</taxon>
        <taxon>Bacillales</taxon>
        <taxon>Bacillaceae</taxon>
        <taxon>Bacillus</taxon>
    </lineage>
</organism>
<gene>
    <name evidence="1" type="primary">metAA</name>
    <name type="synonym">metA</name>
    <name type="synonym">metB</name>
    <name type="ordered locus">BSU21910</name>
</gene>
<sequence>MPINIPTHLPAKQVLESEHIFVMDESRAFHQDIRPQKIIILNLMPKKIQTETQLLRLLGNSPLQVHFTFLIPSTHTPKNTAREHLDEFYTTFSNIRHKRFDGMIITGAPIEHLAFEEVSYWEELKEIMEWSKTNVTSTLHICWGAQAGLYYHYGVEKIQMPKKIFGVFEHTVLSKHERLVRGFDELYYVPHSRHTDINMEQLQAVPELNILTASKEAGVCLIVSKDEKQVFLTGHPEYDTNTLLQEYERDLERNLSTVEAPKHYFAKGSNEPVNRWKAHATLLFMNWLNYYVYQETPYEWD</sequence>
<keyword id="KW-0012">Acyltransferase</keyword>
<keyword id="KW-0028">Amino-acid biosynthesis</keyword>
<keyword id="KW-0963">Cytoplasm</keyword>
<keyword id="KW-0486">Methionine biosynthesis</keyword>
<keyword id="KW-1185">Reference proteome</keyword>
<keyword id="KW-0808">Transferase</keyword>
<reference key="1">
    <citation type="journal article" date="1996" name="Microbiology">
        <title>Organization of the Bacillus subtilis 168 chromosome between kdg and the attachment site of the SP beta prophage: use of long accurate PCR and yeast artificial chromosomes for sequencing.</title>
        <authorList>
            <person name="Capuano V."/>
            <person name="Galleron N."/>
            <person name="Pujic P."/>
            <person name="Sorokin A."/>
            <person name="Ehrlich S.D."/>
        </authorList>
    </citation>
    <scope>NUCLEOTIDE SEQUENCE [GENOMIC DNA]</scope>
    <source>
        <strain>168 / Marburg / ATCC 6051 / DSM 10 / JCM 1465 / NBRC 13719 / NCIMB 3610 / NRRL NRS-744 / VKM B-501</strain>
    </source>
</reference>
<reference key="2">
    <citation type="journal article" date="1997" name="Nature">
        <title>The complete genome sequence of the Gram-positive bacterium Bacillus subtilis.</title>
        <authorList>
            <person name="Kunst F."/>
            <person name="Ogasawara N."/>
            <person name="Moszer I."/>
            <person name="Albertini A.M."/>
            <person name="Alloni G."/>
            <person name="Azevedo V."/>
            <person name="Bertero M.G."/>
            <person name="Bessieres P."/>
            <person name="Bolotin A."/>
            <person name="Borchert S."/>
            <person name="Borriss R."/>
            <person name="Boursier L."/>
            <person name="Brans A."/>
            <person name="Braun M."/>
            <person name="Brignell S.C."/>
            <person name="Bron S."/>
            <person name="Brouillet S."/>
            <person name="Bruschi C.V."/>
            <person name="Caldwell B."/>
            <person name="Capuano V."/>
            <person name="Carter N.M."/>
            <person name="Choi S.-K."/>
            <person name="Codani J.-J."/>
            <person name="Connerton I.F."/>
            <person name="Cummings N.J."/>
            <person name="Daniel R.A."/>
            <person name="Denizot F."/>
            <person name="Devine K.M."/>
            <person name="Duesterhoeft A."/>
            <person name="Ehrlich S.D."/>
            <person name="Emmerson P.T."/>
            <person name="Entian K.-D."/>
            <person name="Errington J."/>
            <person name="Fabret C."/>
            <person name="Ferrari E."/>
            <person name="Foulger D."/>
            <person name="Fritz C."/>
            <person name="Fujita M."/>
            <person name="Fujita Y."/>
            <person name="Fuma S."/>
            <person name="Galizzi A."/>
            <person name="Galleron N."/>
            <person name="Ghim S.-Y."/>
            <person name="Glaser P."/>
            <person name="Goffeau A."/>
            <person name="Golightly E.J."/>
            <person name="Grandi G."/>
            <person name="Guiseppi G."/>
            <person name="Guy B.J."/>
            <person name="Haga K."/>
            <person name="Haiech J."/>
            <person name="Harwood C.R."/>
            <person name="Henaut A."/>
            <person name="Hilbert H."/>
            <person name="Holsappel S."/>
            <person name="Hosono S."/>
            <person name="Hullo M.-F."/>
            <person name="Itaya M."/>
            <person name="Jones L.-M."/>
            <person name="Joris B."/>
            <person name="Karamata D."/>
            <person name="Kasahara Y."/>
            <person name="Klaerr-Blanchard M."/>
            <person name="Klein C."/>
            <person name="Kobayashi Y."/>
            <person name="Koetter P."/>
            <person name="Koningstein G."/>
            <person name="Krogh S."/>
            <person name="Kumano M."/>
            <person name="Kurita K."/>
            <person name="Lapidus A."/>
            <person name="Lardinois S."/>
            <person name="Lauber J."/>
            <person name="Lazarevic V."/>
            <person name="Lee S.-M."/>
            <person name="Levine A."/>
            <person name="Liu H."/>
            <person name="Masuda S."/>
            <person name="Mauel C."/>
            <person name="Medigue C."/>
            <person name="Medina N."/>
            <person name="Mellado R.P."/>
            <person name="Mizuno M."/>
            <person name="Moestl D."/>
            <person name="Nakai S."/>
            <person name="Noback M."/>
            <person name="Noone D."/>
            <person name="O'Reilly M."/>
            <person name="Ogawa K."/>
            <person name="Ogiwara A."/>
            <person name="Oudega B."/>
            <person name="Park S.-H."/>
            <person name="Parro V."/>
            <person name="Pohl T.M."/>
            <person name="Portetelle D."/>
            <person name="Porwollik S."/>
            <person name="Prescott A.M."/>
            <person name="Presecan E."/>
            <person name="Pujic P."/>
            <person name="Purnelle B."/>
            <person name="Rapoport G."/>
            <person name="Rey M."/>
            <person name="Reynolds S."/>
            <person name="Rieger M."/>
            <person name="Rivolta C."/>
            <person name="Rocha E."/>
            <person name="Roche B."/>
            <person name="Rose M."/>
            <person name="Sadaie Y."/>
            <person name="Sato T."/>
            <person name="Scanlan E."/>
            <person name="Schleich S."/>
            <person name="Schroeter R."/>
            <person name="Scoffone F."/>
            <person name="Sekiguchi J."/>
            <person name="Sekowska A."/>
            <person name="Seror S.J."/>
            <person name="Serror P."/>
            <person name="Shin B.-S."/>
            <person name="Soldo B."/>
            <person name="Sorokin A."/>
            <person name="Tacconi E."/>
            <person name="Takagi T."/>
            <person name="Takahashi H."/>
            <person name="Takemaru K."/>
            <person name="Takeuchi M."/>
            <person name="Tamakoshi A."/>
            <person name="Tanaka T."/>
            <person name="Terpstra P."/>
            <person name="Tognoni A."/>
            <person name="Tosato V."/>
            <person name="Uchiyama S."/>
            <person name="Vandenbol M."/>
            <person name="Vannier F."/>
            <person name="Vassarotti A."/>
            <person name="Viari A."/>
            <person name="Wambutt R."/>
            <person name="Wedler E."/>
            <person name="Wedler H."/>
            <person name="Weitzenegger T."/>
            <person name="Winters P."/>
            <person name="Wipat A."/>
            <person name="Yamamoto H."/>
            <person name="Yamane K."/>
            <person name="Yasumoto K."/>
            <person name="Yata K."/>
            <person name="Yoshida K."/>
            <person name="Yoshikawa H.-F."/>
            <person name="Zumstein E."/>
            <person name="Yoshikawa H."/>
            <person name="Danchin A."/>
        </authorList>
    </citation>
    <scope>NUCLEOTIDE SEQUENCE [LARGE SCALE GENOMIC DNA]</scope>
    <source>
        <strain>168</strain>
    </source>
</reference>
<reference key="3">
    <citation type="journal article" date="2009" name="Microbiology">
        <title>From a consortium sequence to a unified sequence: the Bacillus subtilis 168 reference genome a decade later.</title>
        <authorList>
            <person name="Barbe V."/>
            <person name="Cruveiller S."/>
            <person name="Kunst F."/>
            <person name="Lenoble P."/>
            <person name="Meurice G."/>
            <person name="Sekowska A."/>
            <person name="Vallenet D."/>
            <person name="Wang T."/>
            <person name="Moszer I."/>
            <person name="Medigue C."/>
            <person name="Danchin A."/>
        </authorList>
    </citation>
    <scope>SEQUENCE REVISION TO C-TERMINUS</scope>
</reference>
<reference key="4">
    <citation type="unpublished observations" date="2000-12">
        <authorList>
            <person name="Bairoch A."/>
        </authorList>
    </citation>
    <scope>IDENTIFICATION OF PROBABLE FRAMESHIFT</scope>
</reference>
<reference key="5">
    <citation type="journal article" date="1971" name="Biochem. Biophys. Res. Commun.">
        <title>The enzymic formation of O-acetylhomoserine in Bacillus subtilis and its regulation by methionine and S-adenosylmethionine.</title>
        <authorList>
            <person name="Brush A."/>
            <person name="Paulus H."/>
        </authorList>
    </citation>
    <scope>FUNCTION</scope>
</reference>
<name>METAA_BACSU</name>
<feature type="chain" id="PRO_0000199741" description="Homoserine O-acetyltransferase">
    <location>
        <begin position="1"/>
        <end position="301"/>
    </location>
</feature>
<feature type="active site" description="Acyl-thioester intermediate" evidence="1">
    <location>
        <position position="142"/>
    </location>
</feature>
<feature type="active site" description="Proton acceptor" evidence="1">
    <location>
        <position position="235"/>
    </location>
</feature>
<feature type="active site" evidence="1">
    <location>
        <position position="237"/>
    </location>
</feature>
<feature type="binding site" evidence="1">
    <location>
        <position position="163"/>
    </location>
    <ligand>
        <name>substrate</name>
    </ligand>
</feature>
<feature type="binding site" evidence="1">
    <location>
        <position position="192"/>
    </location>
    <ligand>
        <name>substrate</name>
    </ligand>
</feature>
<feature type="binding site" evidence="1">
    <location>
        <position position="249"/>
    </location>
    <ligand>
        <name>substrate</name>
    </ligand>
</feature>
<feature type="site" description="Important for acyl-CoA specificity" evidence="1">
    <location>
        <position position="111"/>
    </location>
</feature>
<feature type="site" description="Important for substrate specificity" evidence="1">
    <location>
        <position position="192"/>
    </location>
</feature>
<comment type="function">
    <text evidence="1 2">Transfers an acetyl group from acetyl-CoA to L-homoserine, forming acetyl-L-homoserine.</text>
</comment>
<comment type="catalytic activity">
    <reaction evidence="1">
        <text>L-homoserine + acetyl-CoA = O-acetyl-L-homoserine + CoA</text>
        <dbReference type="Rhea" id="RHEA:13701"/>
        <dbReference type="ChEBI" id="CHEBI:57287"/>
        <dbReference type="ChEBI" id="CHEBI:57288"/>
        <dbReference type="ChEBI" id="CHEBI:57476"/>
        <dbReference type="ChEBI" id="CHEBI:57716"/>
        <dbReference type="EC" id="2.3.1.31"/>
    </reaction>
</comment>
<comment type="pathway">
    <text evidence="1">Amino-acid biosynthesis; L-methionine biosynthesis via de novo pathway; O-acetyl-L-homoserine from L-homoserine: step 1/1.</text>
</comment>
<comment type="subcellular location">
    <subcellularLocation>
        <location evidence="1">Cytoplasm</location>
    </subcellularLocation>
</comment>
<comment type="similarity">
    <text evidence="1">Belongs to the MetA family.</text>
</comment>
<comment type="sequence caution" evidence="3">
    <conflict type="frameshift">
        <sequence resource="EMBL-CDS" id="AAA96625"/>
    </conflict>
</comment>
<proteinExistence type="inferred from homology"/>
<protein>
    <recommendedName>
        <fullName evidence="1">Homoserine O-acetyltransferase</fullName>
        <shortName evidence="1">HAT</shortName>
        <ecNumber evidence="1">2.3.1.31</ecNumber>
    </recommendedName>
    <alternativeName>
        <fullName evidence="1">Homoserine transacetylase</fullName>
        <shortName evidence="1">HTA</shortName>
    </alternativeName>
</protein>
<dbReference type="EC" id="2.3.1.31" evidence="1"/>
<dbReference type="EMBL" id="L77246">
    <property type="protein sequence ID" value="AAA96625.1"/>
    <property type="status" value="ALT_FRAME"/>
    <property type="molecule type" value="Genomic_DNA"/>
</dbReference>
<dbReference type="EMBL" id="AL009126">
    <property type="protein sequence ID" value="CAB14109.2"/>
    <property type="molecule type" value="Genomic_DNA"/>
</dbReference>
<dbReference type="PIR" id="B69657">
    <property type="entry name" value="B69657"/>
</dbReference>
<dbReference type="RefSeq" id="NP_390074.2">
    <property type="nucleotide sequence ID" value="NC_000964.3"/>
</dbReference>
<dbReference type="RefSeq" id="WP_004398721.1">
    <property type="nucleotide sequence ID" value="NZ_OZ025638.1"/>
</dbReference>
<dbReference type="SMR" id="P54167"/>
<dbReference type="FunCoup" id="P54167">
    <property type="interactions" value="177"/>
</dbReference>
<dbReference type="STRING" id="224308.BSU21910"/>
<dbReference type="PaxDb" id="224308-BSU21910"/>
<dbReference type="EnsemblBacteria" id="CAB14109">
    <property type="protein sequence ID" value="CAB14109"/>
    <property type="gene ID" value="BSU_21910"/>
</dbReference>
<dbReference type="GeneID" id="939083"/>
<dbReference type="KEGG" id="bsu:BSU21910"/>
<dbReference type="PATRIC" id="fig|224308.179.peg.2393"/>
<dbReference type="eggNOG" id="COG1897">
    <property type="taxonomic scope" value="Bacteria"/>
</dbReference>
<dbReference type="InParanoid" id="P54167"/>
<dbReference type="OrthoDB" id="9772423at2"/>
<dbReference type="PhylomeDB" id="P54167"/>
<dbReference type="BioCyc" id="BSUB:BSU21910-MONOMER"/>
<dbReference type="UniPathway" id="UPA00051">
    <property type="reaction ID" value="UER00074"/>
</dbReference>
<dbReference type="Proteomes" id="UP000001570">
    <property type="component" value="Chromosome"/>
</dbReference>
<dbReference type="GO" id="GO:0005737">
    <property type="term" value="C:cytoplasm"/>
    <property type="evidence" value="ECO:0007669"/>
    <property type="project" value="UniProtKB-SubCell"/>
</dbReference>
<dbReference type="GO" id="GO:0004414">
    <property type="term" value="F:homoserine O-acetyltransferase activity"/>
    <property type="evidence" value="ECO:0007669"/>
    <property type="project" value="UniProtKB-EC"/>
</dbReference>
<dbReference type="GO" id="GO:0008899">
    <property type="term" value="F:homoserine O-succinyltransferase activity"/>
    <property type="evidence" value="ECO:0000318"/>
    <property type="project" value="GO_Central"/>
</dbReference>
<dbReference type="GO" id="GO:0019281">
    <property type="term" value="P:L-methionine biosynthetic process from homoserine via O-succinyl-L-homoserine and cystathionine"/>
    <property type="evidence" value="ECO:0007669"/>
    <property type="project" value="InterPro"/>
</dbReference>
<dbReference type="CDD" id="cd03131">
    <property type="entry name" value="GATase1_HTS"/>
    <property type="match status" value="1"/>
</dbReference>
<dbReference type="FunFam" id="3.40.50.880:FF:000004">
    <property type="entry name" value="Homoserine O-succinyltransferase"/>
    <property type="match status" value="1"/>
</dbReference>
<dbReference type="Gene3D" id="3.40.50.880">
    <property type="match status" value="1"/>
</dbReference>
<dbReference type="HAMAP" id="MF_00295">
    <property type="entry name" value="MetA_acyltransf"/>
    <property type="match status" value="1"/>
</dbReference>
<dbReference type="InterPro" id="IPR029062">
    <property type="entry name" value="Class_I_gatase-like"/>
</dbReference>
<dbReference type="InterPro" id="IPR005697">
    <property type="entry name" value="HST_MetA"/>
</dbReference>
<dbReference type="InterPro" id="IPR033752">
    <property type="entry name" value="MetA_family"/>
</dbReference>
<dbReference type="NCBIfam" id="TIGR01001">
    <property type="entry name" value="metA"/>
    <property type="match status" value="1"/>
</dbReference>
<dbReference type="PANTHER" id="PTHR20919">
    <property type="entry name" value="HOMOSERINE O-SUCCINYLTRANSFERASE"/>
    <property type="match status" value="1"/>
</dbReference>
<dbReference type="PANTHER" id="PTHR20919:SF0">
    <property type="entry name" value="HOMOSERINE O-SUCCINYLTRANSFERASE"/>
    <property type="match status" value="1"/>
</dbReference>
<dbReference type="Pfam" id="PF04204">
    <property type="entry name" value="HTS"/>
    <property type="match status" value="1"/>
</dbReference>
<dbReference type="PIRSF" id="PIRSF000450">
    <property type="entry name" value="H_ser_succinyltr"/>
    <property type="match status" value="1"/>
</dbReference>
<dbReference type="SUPFAM" id="SSF52317">
    <property type="entry name" value="Class I glutamine amidotransferase-like"/>
    <property type="match status" value="1"/>
</dbReference>
<accession>P54167</accession>
<evidence type="ECO:0000255" key="1">
    <source>
        <dbReference type="HAMAP-Rule" id="MF_00295"/>
    </source>
</evidence>
<evidence type="ECO:0000269" key="2">
    <source>
    </source>
</evidence>
<evidence type="ECO:0000305" key="3"/>